<dbReference type="EMBL" id="AB032259">
    <property type="protein sequence ID" value="BAA93701.1"/>
    <property type="molecule type" value="mRNA"/>
</dbReference>
<dbReference type="SMR" id="Q9NL40"/>
<dbReference type="GO" id="GO:0000785">
    <property type="term" value="C:chromatin"/>
    <property type="evidence" value="ECO:0007669"/>
    <property type="project" value="TreeGrafter"/>
</dbReference>
<dbReference type="GO" id="GO:0005634">
    <property type="term" value="C:nucleus"/>
    <property type="evidence" value="ECO:0007669"/>
    <property type="project" value="UniProtKB-SubCell"/>
</dbReference>
<dbReference type="GO" id="GO:0000981">
    <property type="term" value="F:DNA-binding transcription factor activity, RNA polymerase II-specific"/>
    <property type="evidence" value="ECO:0007669"/>
    <property type="project" value="TreeGrafter"/>
</dbReference>
<dbReference type="GO" id="GO:0000978">
    <property type="term" value="F:RNA polymerase II cis-regulatory region sequence-specific DNA binding"/>
    <property type="evidence" value="ECO:0007669"/>
    <property type="project" value="InterPro"/>
</dbReference>
<dbReference type="GO" id="GO:0001708">
    <property type="term" value="P:cell fate specification"/>
    <property type="evidence" value="ECO:0007669"/>
    <property type="project" value="TreeGrafter"/>
</dbReference>
<dbReference type="GO" id="GO:0045893">
    <property type="term" value="P:positive regulation of DNA-templated transcription"/>
    <property type="evidence" value="ECO:0007669"/>
    <property type="project" value="InterPro"/>
</dbReference>
<dbReference type="CDD" id="cd20194">
    <property type="entry name" value="T-box_TBR1_2_21-like"/>
    <property type="match status" value="1"/>
</dbReference>
<dbReference type="Gene3D" id="2.60.40.820">
    <property type="entry name" value="Transcription factor, T-box"/>
    <property type="match status" value="1"/>
</dbReference>
<dbReference type="InterPro" id="IPR008967">
    <property type="entry name" value="p53-like_TF_DNA-bd_sf"/>
</dbReference>
<dbReference type="InterPro" id="IPR046360">
    <property type="entry name" value="T-box_DNA-bd"/>
</dbReference>
<dbReference type="InterPro" id="IPR036960">
    <property type="entry name" value="T-box_sf"/>
</dbReference>
<dbReference type="InterPro" id="IPR001699">
    <property type="entry name" value="TF_T-box"/>
</dbReference>
<dbReference type="InterPro" id="IPR018186">
    <property type="entry name" value="TF_T-box_CS"/>
</dbReference>
<dbReference type="PANTHER" id="PTHR11267:SF201">
    <property type="entry name" value="T-BOX DOMAIN-CONTAINING PROTEIN"/>
    <property type="match status" value="1"/>
</dbReference>
<dbReference type="PANTHER" id="PTHR11267">
    <property type="entry name" value="T-BOX PROTEIN-RELATED"/>
    <property type="match status" value="1"/>
</dbReference>
<dbReference type="Pfam" id="PF00907">
    <property type="entry name" value="T-box"/>
    <property type="match status" value="1"/>
</dbReference>
<dbReference type="PRINTS" id="PR00937">
    <property type="entry name" value="TBOX"/>
</dbReference>
<dbReference type="SMART" id="SM00425">
    <property type="entry name" value="TBOX"/>
    <property type="match status" value="1"/>
</dbReference>
<dbReference type="SUPFAM" id="SSF49417">
    <property type="entry name" value="p53-like transcription factors"/>
    <property type="match status" value="1"/>
</dbReference>
<dbReference type="PROSITE" id="PS01283">
    <property type="entry name" value="TBOX_1"/>
    <property type="match status" value="1"/>
</dbReference>
<dbReference type="PROSITE" id="PS50252">
    <property type="entry name" value="TBOX_3"/>
    <property type="match status" value="1"/>
</dbReference>
<gene>
    <name type="primary">tbr1</name>
    <name type="synonym">tbr</name>
</gene>
<comment type="function">
    <text evidence="1">Probable transcriptional regulator involved in developmental processes.</text>
</comment>
<comment type="subcellular location">
    <subcellularLocation>
        <location evidence="2 5">Nucleus</location>
    </subcellularLocation>
</comment>
<comment type="developmental stage">
    <text evidence="4">Expression is first detected in the vegetal plate of the late blastula 17 hours after fertilization. In early gastrula, it is expressed in the archenteron. In late gastrula, expression is detected only in the distal portion of the archenteron and becomes undetectable by the end of gastrulation.</text>
</comment>
<keyword id="KW-0238">DNA-binding</keyword>
<keyword id="KW-0539">Nucleus</keyword>
<keyword id="KW-0804">Transcription</keyword>
<keyword id="KW-0805">Transcription regulation</keyword>
<proteinExistence type="evidence at transcript level"/>
<reference evidence="5 6" key="1">
    <citation type="journal article" date="2000" name="Dev. Growth Differ.">
        <title>A starfish homolog of mouse T-brain-1 is expressed in the archenteron of Asterina pectinifera embryos: possible involvement of two T-box genes in starfish gastrulation.</title>
        <authorList>
            <person name="Shoguchi E."/>
            <person name="Satoh N."/>
            <person name="Maruyama Y.K."/>
        </authorList>
    </citation>
    <scope>NUCLEOTIDE SEQUENCE [MRNA]</scope>
    <scope>DEVELOPMENTAL STAGE</scope>
    <source>
        <tissue evidence="6">Gastrula</tissue>
    </source>
</reference>
<protein>
    <recommendedName>
        <fullName>T-box protein 1</fullName>
    </recommendedName>
    <alternativeName>
        <fullName>T-brain</fullName>
        <shortName evidence="6">Ap-TBR</shortName>
    </alternativeName>
</protein>
<accession>Q9NL40</accession>
<organism>
    <name type="scientific">Patiria pectinifera</name>
    <name type="common">Starfish</name>
    <name type="synonym">Asterina pectinifera</name>
    <dbReference type="NCBI Taxonomy" id="7594"/>
    <lineage>
        <taxon>Eukaryota</taxon>
        <taxon>Metazoa</taxon>
        <taxon>Echinodermata</taxon>
        <taxon>Eleutherozoa</taxon>
        <taxon>Asterozoa</taxon>
        <taxon>Asteroidea</taxon>
        <taxon>Valvatacea</taxon>
        <taxon>Valvatida</taxon>
        <taxon>Asterinidae</taxon>
        <taxon>Patiria</taxon>
    </lineage>
</organism>
<feature type="chain" id="PRO_0000419257" description="T-box protein 1">
    <location>
        <begin position="1"/>
        <end position="761"/>
    </location>
</feature>
<feature type="DNA-binding region" description="T-box" evidence="2">
    <location>
        <begin position="287"/>
        <end position="456"/>
    </location>
</feature>
<feature type="region of interest" description="Disordered" evidence="3">
    <location>
        <begin position="1"/>
        <end position="85"/>
    </location>
</feature>
<feature type="region of interest" description="Disordered" evidence="3">
    <location>
        <begin position="167"/>
        <end position="210"/>
    </location>
</feature>
<feature type="region of interest" description="Disordered" evidence="3">
    <location>
        <begin position="496"/>
        <end position="515"/>
    </location>
</feature>
<feature type="region of interest" description="Disordered" evidence="3">
    <location>
        <begin position="545"/>
        <end position="612"/>
    </location>
</feature>
<feature type="region of interest" description="Disordered" evidence="3">
    <location>
        <begin position="637"/>
        <end position="687"/>
    </location>
</feature>
<feature type="compositionally biased region" description="Polar residues" evidence="3">
    <location>
        <begin position="37"/>
        <end position="61"/>
    </location>
</feature>
<feature type="compositionally biased region" description="Polar residues" evidence="3">
    <location>
        <begin position="167"/>
        <end position="179"/>
    </location>
</feature>
<feature type="compositionally biased region" description="Low complexity" evidence="3">
    <location>
        <begin position="180"/>
        <end position="191"/>
    </location>
</feature>
<feature type="compositionally biased region" description="Low complexity" evidence="3">
    <location>
        <begin position="198"/>
        <end position="210"/>
    </location>
</feature>
<feature type="compositionally biased region" description="Polar residues" evidence="3">
    <location>
        <begin position="496"/>
        <end position="510"/>
    </location>
</feature>
<feature type="compositionally biased region" description="Basic and acidic residues" evidence="3">
    <location>
        <begin position="600"/>
        <end position="612"/>
    </location>
</feature>
<feature type="compositionally biased region" description="Polar residues" evidence="3">
    <location>
        <begin position="637"/>
        <end position="646"/>
    </location>
</feature>
<feature type="compositionally biased region" description="Low complexity" evidence="3">
    <location>
        <begin position="656"/>
        <end position="687"/>
    </location>
</feature>
<sequence>MLGREFYSNVSHVEQGERYTVSHHGSTEDTRQGGNDDLQNTPARSNASTDYSTQSLSNQAGMQPAARRTSMVTEGHVARSQQPLTVNTDFFRGTDQPNATPHPQADPARYAYDSHFHPNTEIANFQTPQMHNYHPYHPNLYHHQYPMHNPSPLHHLQQARVGQMIYQTDPANPSGFPQASPSDLSTTSSQSYYHTGRSSPSVSSSTCSSPVELEDLSVPAKTRPADGFTNLQRTTCPDFSIPSTEQCMQELTPRIRPPSAEQQAPSIGASPPQEFSKASVFLCNSELWRKFHEHRTEMIITKQGRRMFPQLVFRLSGLNPAAHYNVFVDMVIADPNSWKFQSGKWVATGKSDGVPRATGIFKHPDSPNTGEHWMRQDIAFSKLKLTNNRGKDSGYLVINSMHIYQPRIHVLDLTGARVLQTHSFPETQFIGVTAYQNTDITQLKIDHNPFAKGFRDNYDSFATRERLSYVASLQEQRNRTKPVQCTAANAIIPSDTTGFPCQTNPTQRSNGQHEGRPLPMKLIRASEPCSSTNLAPACNSGSGMSGDAICSDSAPSSTIRHSPKSIGEREGALPNLGALNNSGHPGSVLDTPPNQSPHGGCERSNEKHTPAHKLGEGLGCGMLECGEIPWLNTPPSVCSSDNSNPDLPSAKRLRISPAGSGSPSVTSGTSLFTSGSSAAPSPPLLTTAPTAHIAPGLDSTLSTEGVVQCSNRSLVMPQPYYGVGGSFAYQNDSHMGYSYMGQTRQGLNLATSAPYYYQQNN</sequence>
<evidence type="ECO:0000250" key="1">
    <source>
        <dbReference type="UniProtKB" id="Q64336"/>
    </source>
</evidence>
<evidence type="ECO:0000255" key="2">
    <source>
        <dbReference type="PROSITE-ProRule" id="PRU00201"/>
    </source>
</evidence>
<evidence type="ECO:0000256" key="3">
    <source>
        <dbReference type="SAM" id="MobiDB-lite"/>
    </source>
</evidence>
<evidence type="ECO:0000269" key="4">
    <source>
    </source>
</evidence>
<evidence type="ECO:0000305" key="5"/>
<evidence type="ECO:0000312" key="6">
    <source>
        <dbReference type="EMBL" id="BAA93701.1"/>
    </source>
</evidence>
<name>TBR1_PATPE</name>